<name>SSRP_EHRCJ</name>
<comment type="function">
    <text evidence="1">Required for rescue of stalled ribosomes mediated by trans-translation. Binds to transfer-messenger RNA (tmRNA), required for stable association of tmRNA with ribosomes. tmRNA and SmpB together mimic tRNA shape, replacing the anticodon stem-loop with SmpB. tmRNA is encoded by the ssrA gene; the 2 termini fold to resemble tRNA(Ala) and it encodes a 'tag peptide', a short internal open reading frame. During trans-translation Ala-aminoacylated tmRNA acts like a tRNA, entering the A-site of stalled ribosomes, displacing the stalled mRNA. The ribosome then switches to translate the ORF on the tmRNA; the nascent peptide is terminated with the 'tag peptide' encoded by the tmRNA and targeted for degradation. The ribosome is freed to recommence translation, which seems to be the essential function of trans-translation.</text>
</comment>
<comment type="subcellular location">
    <subcellularLocation>
        <location evidence="1">Cytoplasm</location>
    </subcellularLocation>
    <text evidence="1">The tmRNA-SmpB complex associates with stalled 70S ribosomes.</text>
</comment>
<comment type="similarity">
    <text evidence="1">Belongs to the SmpB family.</text>
</comment>
<dbReference type="EMBL" id="CP000107">
    <property type="protein sequence ID" value="AAZ68137.1"/>
    <property type="molecule type" value="Genomic_DNA"/>
</dbReference>
<dbReference type="RefSeq" id="WP_011304215.1">
    <property type="nucleotide sequence ID" value="NC_007354.1"/>
</dbReference>
<dbReference type="SMR" id="Q3YT18"/>
<dbReference type="FunCoup" id="Q3YT18">
    <property type="interactions" value="251"/>
</dbReference>
<dbReference type="STRING" id="269484.Ecaj_0086"/>
<dbReference type="KEGG" id="ecn:Ecaj_0086"/>
<dbReference type="eggNOG" id="COG0691">
    <property type="taxonomic scope" value="Bacteria"/>
</dbReference>
<dbReference type="HOGENOM" id="CLU_108953_0_1_5"/>
<dbReference type="InParanoid" id="Q3YT18"/>
<dbReference type="Proteomes" id="UP000000435">
    <property type="component" value="Chromosome"/>
</dbReference>
<dbReference type="GO" id="GO:0005829">
    <property type="term" value="C:cytosol"/>
    <property type="evidence" value="ECO:0007669"/>
    <property type="project" value="TreeGrafter"/>
</dbReference>
<dbReference type="GO" id="GO:0003723">
    <property type="term" value="F:RNA binding"/>
    <property type="evidence" value="ECO:0007669"/>
    <property type="project" value="UniProtKB-UniRule"/>
</dbReference>
<dbReference type="GO" id="GO:0070929">
    <property type="term" value="P:trans-translation"/>
    <property type="evidence" value="ECO:0007669"/>
    <property type="project" value="UniProtKB-UniRule"/>
</dbReference>
<dbReference type="CDD" id="cd09294">
    <property type="entry name" value="SmpB"/>
    <property type="match status" value="1"/>
</dbReference>
<dbReference type="Gene3D" id="2.40.280.10">
    <property type="match status" value="1"/>
</dbReference>
<dbReference type="HAMAP" id="MF_00023">
    <property type="entry name" value="SmpB"/>
    <property type="match status" value="1"/>
</dbReference>
<dbReference type="InterPro" id="IPR023620">
    <property type="entry name" value="SmpB"/>
</dbReference>
<dbReference type="InterPro" id="IPR000037">
    <property type="entry name" value="SsrA-bd_prot"/>
</dbReference>
<dbReference type="InterPro" id="IPR020081">
    <property type="entry name" value="SsrA-bd_prot_CS"/>
</dbReference>
<dbReference type="NCBIfam" id="NF003843">
    <property type="entry name" value="PRK05422.1"/>
    <property type="match status" value="1"/>
</dbReference>
<dbReference type="NCBIfam" id="TIGR00086">
    <property type="entry name" value="smpB"/>
    <property type="match status" value="1"/>
</dbReference>
<dbReference type="PANTHER" id="PTHR30308:SF2">
    <property type="entry name" value="SSRA-BINDING PROTEIN"/>
    <property type="match status" value="1"/>
</dbReference>
<dbReference type="PANTHER" id="PTHR30308">
    <property type="entry name" value="TMRNA-BINDING COMPONENT OF TRANS-TRANSLATION TAGGING COMPLEX"/>
    <property type="match status" value="1"/>
</dbReference>
<dbReference type="Pfam" id="PF01668">
    <property type="entry name" value="SmpB"/>
    <property type="match status" value="1"/>
</dbReference>
<dbReference type="SUPFAM" id="SSF74982">
    <property type="entry name" value="Small protein B (SmpB)"/>
    <property type="match status" value="1"/>
</dbReference>
<dbReference type="PROSITE" id="PS01317">
    <property type="entry name" value="SSRP"/>
    <property type="match status" value="1"/>
</dbReference>
<keyword id="KW-0963">Cytoplasm</keyword>
<keyword id="KW-0694">RNA-binding</keyword>
<feature type="chain" id="PRO_1000002049" description="SsrA-binding protein">
    <location>
        <begin position="1"/>
        <end position="148"/>
    </location>
</feature>
<accession>Q3YT18</accession>
<gene>
    <name evidence="1" type="primary">smpB</name>
    <name type="ordered locus">Ecaj_0086</name>
</gene>
<organism>
    <name type="scientific">Ehrlichia canis (strain Jake)</name>
    <dbReference type="NCBI Taxonomy" id="269484"/>
    <lineage>
        <taxon>Bacteria</taxon>
        <taxon>Pseudomonadati</taxon>
        <taxon>Pseudomonadota</taxon>
        <taxon>Alphaproteobacteria</taxon>
        <taxon>Rickettsiales</taxon>
        <taxon>Anaplasmataceae</taxon>
        <taxon>Ehrlichia</taxon>
    </lineage>
</organism>
<reference key="1">
    <citation type="journal article" date="2006" name="J. Bacteriol.">
        <title>The genome of the obligately intracellular bacterium Ehrlichia canis reveals themes of complex membrane structure and immune evasion strategies.</title>
        <authorList>
            <person name="Mavromatis K."/>
            <person name="Doyle C.K."/>
            <person name="Lykidis A."/>
            <person name="Ivanova N."/>
            <person name="Francino M.P."/>
            <person name="Chain P."/>
            <person name="Shin M."/>
            <person name="Malfatti S."/>
            <person name="Larimer F."/>
            <person name="Copeland A."/>
            <person name="Detter J.C."/>
            <person name="Land M."/>
            <person name="Richardson P.M."/>
            <person name="Yu X.J."/>
            <person name="Walker D.H."/>
            <person name="McBride J.W."/>
            <person name="Kyrpides N.C."/>
        </authorList>
    </citation>
    <scope>NUCLEOTIDE SEQUENCE [LARGE SCALE GENOMIC DNA]</scope>
    <source>
        <strain>Jake</strain>
    </source>
</reference>
<sequence length="148" mass="17352">MDVIIENRKVRFNYFIIQEFDAGIVLIGSEVKSLRQRKVSIAEAYVTEKNMELWLCNLHISEYNHASTKNHNPTRPRKLLLRKKQIYKISGNIKNDGFTVVPLSLYFNEKGLAKAKIVIVKGKKLHDKRETIKTRDWNREKSRVLRGN</sequence>
<proteinExistence type="inferred from homology"/>
<evidence type="ECO:0000255" key="1">
    <source>
        <dbReference type="HAMAP-Rule" id="MF_00023"/>
    </source>
</evidence>
<protein>
    <recommendedName>
        <fullName evidence="1">SsrA-binding protein</fullName>
    </recommendedName>
    <alternativeName>
        <fullName evidence="1">Small protein B</fullName>
    </alternativeName>
</protein>